<keyword id="KW-0028">Amino-acid biosynthesis</keyword>
<keyword id="KW-0032">Aminotransferase</keyword>
<keyword id="KW-0100">Branched-chain amino acid biosynthesis</keyword>
<keyword id="KW-0663">Pyridoxal phosphate</keyword>
<keyword id="KW-0808">Transferase</keyword>
<comment type="function">
    <text evidence="1">Acts on leucine, isoleucine and valine.</text>
</comment>
<comment type="catalytic activity">
    <reaction>
        <text>L-leucine + 2-oxoglutarate = 4-methyl-2-oxopentanoate + L-glutamate</text>
        <dbReference type="Rhea" id="RHEA:18321"/>
        <dbReference type="ChEBI" id="CHEBI:16810"/>
        <dbReference type="ChEBI" id="CHEBI:17865"/>
        <dbReference type="ChEBI" id="CHEBI:29985"/>
        <dbReference type="ChEBI" id="CHEBI:57427"/>
        <dbReference type="EC" id="2.6.1.42"/>
    </reaction>
</comment>
<comment type="catalytic activity">
    <reaction>
        <text>L-isoleucine + 2-oxoglutarate = (S)-3-methyl-2-oxopentanoate + L-glutamate</text>
        <dbReference type="Rhea" id="RHEA:24801"/>
        <dbReference type="ChEBI" id="CHEBI:16810"/>
        <dbReference type="ChEBI" id="CHEBI:29985"/>
        <dbReference type="ChEBI" id="CHEBI:35146"/>
        <dbReference type="ChEBI" id="CHEBI:58045"/>
        <dbReference type="EC" id="2.6.1.42"/>
    </reaction>
</comment>
<comment type="catalytic activity">
    <reaction>
        <text>L-valine + 2-oxoglutarate = 3-methyl-2-oxobutanoate + L-glutamate</text>
        <dbReference type="Rhea" id="RHEA:24813"/>
        <dbReference type="ChEBI" id="CHEBI:11851"/>
        <dbReference type="ChEBI" id="CHEBI:16810"/>
        <dbReference type="ChEBI" id="CHEBI:29985"/>
        <dbReference type="ChEBI" id="CHEBI:57762"/>
        <dbReference type="EC" id="2.6.1.42"/>
    </reaction>
</comment>
<comment type="cofactor">
    <cofactor evidence="1">
        <name>pyridoxal 5'-phosphate</name>
        <dbReference type="ChEBI" id="CHEBI:597326"/>
    </cofactor>
</comment>
<comment type="pathway">
    <text>Amino-acid biosynthesis; L-isoleucine biosynthesis; L-isoleucine from 2-oxobutanoate: step 4/4.</text>
</comment>
<comment type="pathway">
    <text>Amino-acid biosynthesis; L-leucine biosynthesis; L-leucine from 3-methyl-2-oxobutanoate: step 4/4.</text>
</comment>
<comment type="pathway">
    <text>Amino-acid biosynthesis; L-valine biosynthesis; L-valine from pyruvate: step 4/4.</text>
</comment>
<comment type="similarity">
    <text evidence="2">Belongs to the class-IV pyridoxal-phosphate-dependent aminotransferase family.</text>
</comment>
<accession>Q6GBT3</accession>
<protein>
    <recommendedName>
        <fullName>Probable branched-chain-amino-acid aminotransferase</fullName>
        <shortName>BCAT</shortName>
        <ecNumber>2.6.1.42</ecNumber>
    </recommendedName>
</protein>
<gene>
    <name type="primary">ilvE</name>
    <name type="ordered locus">SAS0512</name>
</gene>
<name>ILVE_STAAS</name>
<organism>
    <name type="scientific">Staphylococcus aureus (strain MSSA476)</name>
    <dbReference type="NCBI Taxonomy" id="282459"/>
    <lineage>
        <taxon>Bacteria</taxon>
        <taxon>Bacillati</taxon>
        <taxon>Bacillota</taxon>
        <taxon>Bacilli</taxon>
        <taxon>Bacillales</taxon>
        <taxon>Staphylococcaceae</taxon>
        <taxon>Staphylococcus</taxon>
    </lineage>
</organism>
<dbReference type="EC" id="2.6.1.42"/>
<dbReference type="EMBL" id="BX571857">
    <property type="protein sequence ID" value="CAG42287.1"/>
    <property type="molecule type" value="Genomic_DNA"/>
</dbReference>
<dbReference type="RefSeq" id="WP_000076036.1">
    <property type="nucleotide sequence ID" value="NC_002953.3"/>
</dbReference>
<dbReference type="SMR" id="Q6GBT3"/>
<dbReference type="KEGG" id="sas:SAS0512"/>
<dbReference type="HOGENOM" id="CLU_031922_0_2_9"/>
<dbReference type="UniPathway" id="UPA00047">
    <property type="reaction ID" value="UER00058"/>
</dbReference>
<dbReference type="UniPathway" id="UPA00048">
    <property type="reaction ID" value="UER00073"/>
</dbReference>
<dbReference type="UniPathway" id="UPA00049">
    <property type="reaction ID" value="UER00062"/>
</dbReference>
<dbReference type="GO" id="GO:0052656">
    <property type="term" value="F:L-isoleucine-2-oxoglutarate transaminase activity"/>
    <property type="evidence" value="ECO:0007669"/>
    <property type="project" value="RHEA"/>
</dbReference>
<dbReference type="GO" id="GO:0052654">
    <property type="term" value="F:L-leucine-2-oxoglutarate transaminase activity"/>
    <property type="evidence" value="ECO:0007669"/>
    <property type="project" value="RHEA"/>
</dbReference>
<dbReference type="GO" id="GO:0052655">
    <property type="term" value="F:L-valine-2-oxoglutarate transaminase activity"/>
    <property type="evidence" value="ECO:0007669"/>
    <property type="project" value="RHEA"/>
</dbReference>
<dbReference type="GO" id="GO:0009097">
    <property type="term" value="P:isoleucine biosynthetic process"/>
    <property type="evidence" value="ECO:0007669"/>
    <property type="project" value="UniProtKB-UniPathway"/>
</dbReference>
<dbReference type="GO" id="GO:0009098">
    <property type="term" value="P:L-leucine biosynthetic process"/>
    <property type="evidence" value="ECO:0007669"/>
    <property type="project" value="UniProtKB-UniPathway"/>
</dbReference>
<dbReference type="GO" id="GO:0009099">
    <property type="term" value="P:L-valine biosynthetic process"/>
    <property type="evidence" value="ECO:0007669"/>
    <property type="project" value="UniProtKB-UniPathway"/>
</dbReference>
<dbReference type="CDD" id="cd01557">
    <property type="entry name" value="BCAT_beta_family"/>
    <property type="match status" value="1"/>
</dbReference>
<dbReference type="Gene3D" id="3.30.470.10">
    <property type="match status" value="1"/>
</dbReference>
<dbReference type="Gene3D" id="3.20.10.10">
    <property type="entry name" value="D-amino Acid Aminotransferase, subunit A, domain 2"/>
    <property type="match status" value="1"/>
</dbReference>
<dbReference type="InterPro" id="IPR001544">
    <property type="entry name" value="Aminotrans_IV"/>
</dbReference>
<dbReference type="InterPro" id="IPR018300">
    <property type="entry name" value="Aminotrans_IV_CS"/>
</dbReference>
<dbReference type="InterPro" id="IPR036038">
    <property type="entry name" value="Aminotransferase-like"/>
</dbReference>
<dbReference type="InterPro" id="IPR005786">
    <property type="entry name" value="B_amino_transII"/>
</dbReference>
<dbReference type="InterPro" id="IPR043132">
    <property type="entry name" value="BCAT-like_C"/>
</dbReference>
<dbReference type="InterPro" id="IPR043131">
    <property type="entry name" value="BCAT-like_N"/>
</dbReference>
<dbReference type="InterPro" id="IPR033939">
    <property type="entry name" value="BCAT_family"/>
</dbReference>
<dbReference type="NCBIfam" id="TIGR01123">
    <property type="entry name" value="ilvE_II"/>
    <property type="match status" value="1"/>
</dbReference>
<dbReference type="NCBIfam" id="NF009897">
    <property type="entry name" value="PRK13357.1"/>
    <property type="match status" value="1"/>
</dbReference>
<dbReference type="PANTHER" id="PTHR11825:SF44">
    <property type="entry name" value="BRANCHED-CHAIN-AMINO-ACID AMINOTRANSFERASE"/>
    <property type="match status" value="1"/>
</dbReference>
<dbReference type="PANTHER" id="PTHR11825">
    <property type="entry name" value="SUBGROUP IIII AMINOTRANSFERASE"/>
    <property type="match status" value="1"/>
</dbReference>
<dbReference type="Pfam" id="PF01063">
    <property type="entry name" value="Aminotran_4"/>
    <property type="match status" value="1"/>
</dbReference>
<dbReference type="PIRSF" id="PIRSF006468">
    <property type="entry name" value="BCAT1"/>
    <property type="match status" value="1"/>
</dbReference>
<dbReference type="SUPFAM" id="SSF56752">
    <property type="entry name" value="D-aminoacid aminotransferase-like PLP-dependent enzymes"/>
    <property type="match status" value="1"/>
</dbReference>
<dbReference type="PROSITE" id="PS00770">
    <property type="entry name" value="AA_TRANSFER_CLASS_4"/>
    <property type="match status" value="1"/>
</dbReference>
<proteinExistence type="inferred from homology"/>
<sequence length="358" mass="40086">MSQAVKVERRETLKQKPNTSQLGFGKYFTDYMLSYDYDADKGWHDLKIVPYGPIEISPAAQGVHYGQSVFEGLKAYKRDGEVALFRPEENFKRLNNSLARLEMPQVDEAELLEGLKQLVDIERDWIPEGEGQSLYIRPFVFATEGALGVGASHQYKLLIILSPSGAYYGGETLKPTKIYVEDEYVRAVRGGVGFAKVAGNYAASLLAQTNANKLGYDQVLWLDGVEQKYIEEVGSMNIFFVENGKVITPELNGSILPGITRKSIIELAKNLGYEVEERRVSIDELFESYDKGELTEVFGSGTAAVISPVGTLRYEDREIVINNNETGEITQKLYDVYTGIQNGTLEDKNGWRVVVPKY</sequence>
<reference key="1">
    <citation type="journal article" date="2004" name="Proc. Natl. Acad. Sci. U.S.A.">
        <title>Complete genomes of two clinical Staphylococcus aureus strains: evidence for the rapid evolution of virulence and drug resistance.</title>
        <authorList>
            <person name="Holden M.T.G."/>
            <person name="Feil E.J."/>
            <person name="Lindsay J.A."/>
            <person name="Peacock S.J."/>
            <person name="Day N.P.J."/>
            <person name="Enright M.C."/>
            <person name="Foster T.J."/>
            <person name="Moore C.E."/>
            <person name="Hurst L."/>
            <person name="Atkin R."/>
            <person name="Barron A."/>
            <person name="Bason N."/>
            <person name="Bentley S.D."/>
            <person name="Chillingworth C."/>
            <person name="Chillingworth T."/>
            <person name="Churcher C."/>
            <person name="Clark L."/>
            <person name="Corton C."/>
            <person name="Cronin A."/>
            <person name="Doggett J."/>
            <person name="Dowd L."/>
            <person name="Feltwell T."/>
            <person name="Hance Z."/>
            <person name="Harris B."/>
            <person name="Hauser H."/>
            <person name="Holroyd S."/>
            <person name="Jagels K."/>
            <person name="James K.D."/>
            <person name="Lennard N."/>
            <person name="Line A."/>
            <person name="Mayes R."/>
            <person name="Moule S."/>
            <person name="Mungall K."/>
            <person name="Ormond D."/>
            <person name="Quail M.A."/>
            <person name="Rabbinowitsch E."/>
            <person name="Rutherford K.M."/>
            <person name="Sanders M."/>
            <person name="Sharp S."/>
            <person name="Simmonds M."/>
            <person name="Stevens K."/>
            <person name="Whitehead S."/>
            <person name="Barrell B.G."/>
            <person name="Spratt B.G."/>
            <person name="Parkhill J."/>
        </authorList>
    </citation>
    <scope>NUCLEOTIDE SEQUENCE [LARGE SCALE GENOMIC DNA]</scope>
    <source>
        <strain>MSSA476</strain>
    </source>
</reference>
<evidence type="ECO:0000250" key="1"/>
<evidence type="ECO:0000305" key="2"/>
<feature type="chain" id="PRO_0000103281" description="Probable branched-chain-amino-acid aminotransferase">
    <location>
        <begin position="1"/>
        <end position="358"/>
    </location>
</feature>
<feature type="modified residue" description="N6-(pyridoxal phosphate)lysine" evidence="1">
    <location>
        <position position="196"/>
    </location>
</feature>